<sequence>MERPLWVRWLKVYAIGGAIIGSGFLLFKYTTPTDQQLISQLSPELRLQYEREKKLRQSEQQALMKIVKETSQSDDPIWKTGPLQSPWERNGDNVQSRDHFAKVRAEEVQKEELARIRNELSQLRSETEEKTKEIVQDKQVKSWWRFW</sequence>
<organism>
    <name type="scientific">Saccharomyces cerevisiae (strain Lalvin EC1118 / Prise de mousse)</name>
    <name type="common">Baker's yeast</name>
    <dbReference type="NCBI Taxonomy" id="643680"/>
    <lineage>
        <taxon>Eukaryota</taxon>
        <taxon>Fungi</taxon>
        <taxon>Dikarya</taxon>
        <taxon>Ascomycota</taxon>
        <taxon>Saccharomycotina</taxon>
        <taxon>Saccharomycetes</taxon>
        <taxon>Saccharomycetales</taxon>
        <taxon>Saccharomycetaceae</taxon>
        <taxon>Saccharomyces</taxon>
    </lineage>
</organism>
<accession>C8Z970</accession>
<reference key="1">
    <citation type="journal article" date="2009" name="Proc. Natl. Acad. Sci. U.S.A.">
        <title>Eukaryote-to-eukaryote gene transfer events revealed by the genome sequence of the wine yeast Saccharomyces cerevisiae EC1118.</title>
        <authorList>
            <person name="Novo M."/>
            <person name="Bigey F."/>
            <person name="Beyne E."/>
            <person name="Galeote V."/>
            <person name="Gavory F."/>
            <person name="Mallet S."/>
            <person name="Cambon B."/>
            <person name="Legras J.-L."/>
            <person name="Wincker P."/>
            <person name="Casaregola S."/>
            <person name="Dequin S."/>
        </authorList>
    </citation>
    <scope>NUCLEOTIDE SEQUENCE [LARGE SCALE GENOMIC DNA]</scope>
    <source>
        <strain>Lalvin EC1118 / Prise de mousse</strain>
    </source>
</reference>
<comment type="function">
    <text evidence="1">Essential for the assembly of ubiquinol-cytochrome c reductase. It has a direct effect on the correct occurrence of the Rieske protein, core 4, core 5 and apocytochrome b (By similarity).</text>
</comment>
<comment type="subcellular location">
    <subcellularLocation>
        <location evidence="1">Mitochondrion inner membrane</location>
        <topology evidence="1">Single-pass membrane protein</topology>
    </subcellularLocation>
</comment>
<comment type="similarity">
    <text evidence="4">Belongs to the CBP4 family.</text>
</comment>
<comment type="sequence caution" evidence="4">
    <conflict type="erroneous initiation">
        <sequence resource="EMBL-CDS" id="CAY79936"/>
    </conflict>
</comment>
<feature type="chain" id="PRO_0000392085" description="Assembly factor CBP4">
    <location>
        <begin position="1"/>
        <end position="147"/>
    </location>
</feature>
<feature type="transmembrane region" description="Helical" evidence="2">
    <location>
        <begin position="5"/>
        <end position="27"/>
    </location>
</feature>
<feature type="region of interest" description="Disordered" evidence="3">
    <location>
        <begin position="73"/>
        <end position="94"/>
    </location>
</feature>
<protein>
    <recommendedName>
        <fullName>Assembly factor CBP4</fullName>
    </recommendedName>
    <alternativeName>
        <fullName>Cytochrome b mRNA-processing protein 4</fullName>
    </alternativeName>
</protein>
<proteinExistence type="inferred from homology"/>
<evidence type="ECO:0000250" key="1"/>
<evidence type="ECO:0000255" key="2"/>
<evidence type="ECO:0000256" key="3">
    <source>
        <dbReference type="SAM" id="MobiDB-lite"/>
    </source>
</evidence>
<evidence type="ECO:0000305" key="4"/>
<gene>
    <name type="primary">CBP4</name>
    <name type="ORF">EC1118_1G1_4995g</name>
</gene>
<dbReference type="EMBL" id="FN393070">
    <property type="protein sequence ID" value="CAY79936.1"/>
    <property type="status" value="ALT_INIT"/>
    <property type="molecule type" value="Genomic_DNA"/>
</dbReference>
<dbReference type="SMR" id="C8Z970"/>
<dbReference type="HOGENOM" id="CLU_147520_0_0_1"/>
<dbReference type="OrthoDB" id="7422at4893"/>
<dbReference type="Proteomes" id="UP000000286">
    <property type="component" value="Chromosome VII, Scaffold EC1118_1G1"/>
</dbReference>
<dbReference type="GO" id="GO:0005743">
    <property type="term" value="C:mitochondrial inner membrane"/>
    <property type="evidence" value="ECO:0007669"/>
    <property type="project" value="UniProtKB-SubCell"/>
</dbReference>
<dbReference type="GO" id="GO:0034551">
    <property type="term" value="P:mitochondrial respiratory chain complex III assembly"/>
    <property type="evidence" value="ECO:0007669"/>
    <property type="project" value="TreeGrafter"/>
</dbReference>
<dbReference type="InterPro" id="IPR012420">
    <property type="entry name" value="Cbp4"/>
</dbReference>
<dbReference type="PANTHER" id="PTHR28202">
    <property type="entry name" value="ASSEMBLY FACTOR CBP4"/>
    <property type="match status" value="1"/>
</dbReference>
<dbReference type="PANTHER" id="PTHR28202:SF1">
    <property type="entry name" value="ASSEMBLY FACTOR CBP4"/>
    <property type="match status" value="1"/>
</dbReference>
<dbReference type="Pfam" id="PF07960">
    <property type="entry name" value="CBP4"/>
    <property type="match status" value="1"/>
</dbReference>
<keyword id="KW-0143">Chaperone</keyword>
<keyword id="KW-0472">Membrane</keyword>
<keyword id="KW-0496">Mitochondrion</keyword>
<keyword id="KW-0999">Mitochondrion inner membrane</keyword>
<keyword id="KW-0812">Transmembrane</keyword>
<keyword id="KW-1133">Transmembrane helix</keyword>
<name>CBP4_YEAS8</name>